<comment type="function">
    <text evidence="1">Catalyzes the hydrolysis of UDP-3-O-myristoyl-N-acetylglucosamine to form UDP-3-O-myristoylglucosamine and acetate, the committed step in lipid A biosynthesis.</text>
</comment>
<comment type="catalytic activity">
    <reaction evidence="1">
        <text>a UDP-3-O-[(3R)-3-hydroxyacyl]-N-acetyl-alpha-D-glucosamine + H2O = a UDP-3-O-[(3R)-3-hydroxyacyl]-alpha-D-glucosamine + acetate</text>
        <dbReference type="Rhea" id="RHEA:67816"/>
        <dbReference type="ChEBI" id="CHEBI:15377"/>
        <dbReference type="ChEBI" id="CHEBI:30089"/>
        <dbReference type="ChEBI" id="CHEBI:137740"/>
        <dbReference type="ChEBI" id="CHEBI:173225"/>
        <dbReference type="EC" id="3.5.1.108"/>
    </reaction>
</comment>
<comment type="cofactor">
    <cofactor evidence="1">
        <name>Zn(2+)</name>
        <dbReference type="ChEBI" id="CHEBI:29105"/>
    </cofactor>
</comment>
<comment type="pathway">
    <text evidence="1">Glycolipid biosynthesis; lipid IV(A) biosynthesis; lipid IV(A) from (3R)-3-hydroxytetradecanoyl-[acyl-carrier-protein] and UDP-N-acetyl-alpha-D-glucosamine: step 2/6.</text>
</comment>
<comment type="similarity">
    <text evidence="1">Belongs to the LpxC family.</text>
</comment>
<protein>
    <recommendedName>
        <fullName evidence="1">UDP-3-O-acyl-N-acetylglucosamine deacetylase</fullName>
        <shortName evidence="1">UDP-3-O-acyl-GlcNAc deacetylase</shortName>
        <ecNumber evidence="1">3.5.1.108</ecNumber>
    </recommendedName>
    <alternativeName>
        <fullName evidence="1">UDP-3-O-[R-3-hydroxymyristoyl]-N-acetylglucosamine deacetylase</fullName>
    </alternativeName>
</protein>
<accession>A1KR52</accession>
<feature type="chain" id="PRO_1000013214" description="UDP-3-O-acyl-N-acetylglucosamine deacetylase">
    <location>
        <begin position="1"/>
        <end position="307"/>
    </location>
</feature>
<feature type="active site" description="Proton donor" evidence="1">
    <location>
        <position position="266"/>
    </location>
</feature>
<feature type="binding site" evidence="1">
    <location>
        <position position="80"/>
    </location>
    <ligand>
        <name>Zn(2+)</name>
        <dbReference type="ChEBI" id="CHEBI:29105"/>
    </ligand>
</feature>
<feature type="binding site" evidence="1">
    <location>
        <position position="239"/>
    </location>
    <ligand>
        <name>Zn(2+)</name>
        <dbReference type="ChEBI" id="CHEBI:29105"/>
    </ligand>
</feature>
<feature type="binding site" evidence="1">
    <location>
        <position position="243"/>
    </location>
    <ligand>
        <name>Zn(2+)</name>
        <dbReference type="ChEBI" id="CHEBI:29105"/>
    </ligand>
</feature>
<gene>
    <name evidence="1" type="primary">lpxC</name>
    <name type="ordered locus">NMC0001</name>
</gene>
<keyword id="KW-0378">Hydrolase</keyword>
<keyword id="KW-0441">Lipid A biosynthesis</keyword>
<keyword id="KW-0444">Lipid biosynthesis</keyword>
<keyword id="KW-0443">Lipid metabolism</keyword>
<keyword id="KW-0479">Metal-binding</keyword>
<keyword id="KW-0862">Zinc</keyword>
<organism>
    <name type="scientific">Neisseria meningitidis serogroup C / serotype 2a (strain ATCC 700532 / DSM 15464 / FAM18)</name>
    <dbReference type="NCBI Taxonomy" id="272831"/>
    <lineage>
        <taxon>Bacteria</taxon>
        <taxon>Pseudomonadati</taxon>
        <taxon>Pseudomonadota</taxon>
        <taxon>Betaproteobacteria</taxon>
        <taxon>Neisseriales</taxon>
        <taxon>Neisseriaceae</taxon>
        <taxon>Neisseria</taxon>
    </lineage>
</organism>
<reference key="1">
    <citation type="journal article" date="2007" name="PLoS Genet.">
        <title>Meningococcal genetic variation mechanisms viewed through comparative analysis of serogroup C strain FAM18.</title>
        <authorList>
            <person name="Bentley S.D."/>
            <person name="Vernikos G.S."/>
            <person name="Snyder L.A.S."/>
            <person name="Churcher C."/>
            <person name="Arrowsmith C."/>
            <person name="Chillingworth T."/>
            <person name="Cronin A."/>
            <person name="Davis P.H."/>
            <person name="Holroyd N.E."/>
            <person name="Jagels K."/>
            <person name="Maddison M."/>
            <person name="Moule S."/>
            <person name="Rabbinowitsch E."/>
            <person name="Sharp S."/>
            <person name="Unwin L."/>
            <person name="Whitehead S."/>
            <person name="Quail M.A."/>
            <person name="Achtman M."/>
            <person name="Barrell B.G."/>
            <person name="Saunders N.J."/>
            <person name="Parkhill J."/>
        </authorList>
    </citation>
    <scope>NUCLEOTIDE SEQUENCE [LARGE SCALE GENOMIC DNA]</scope>
    <source>
        <strain>ATCC 700532 / DSM 15464 / FAM18</strain>
    </source>
</reference>
<name>LPXC_NEIMF</name>
<sequence length="307" mass="33972">MLQRTLAKSISVTGVGLHSGERVALTLHPAPENSGISFRRTDLDGEMGEQIKLTPYLINDTRLSSTIVTDKGVRVGTIEHIMSALSAYGIDNALIELNAPEIPIMDGSSLPFIYLLQDAGVVDQKAQKRFLKILKPVEIKEAGKWVRFTPYDGFKVTLTIEFDHPAFNRSSPTFEIDFAGKSYIDEIARARTFGFMHEVEMMRAHNLGLGGNLNNAIVIDDTDVLNPEGLRYPDEFVRHKILDAIGDLYIVGHPIVGAFEGYKSGHAINNALLRAVLADETAYDRVEFADSDDLPDAFHELNIRNCG</sequence>
<dbReference type="EC" id="3.5.1.108" evidence="1"/>
<dbReference type="EMBL" id="AM421808">
    <property type="protein sequence ID" value="CAM09327.1"/>
    <property type="molecule type" value="Genomic_DNA"/>
</dbReference>
<dbReference type="RefSeq" id="WP_002220060.1">
    <property type="nucleotide sequence ID" value="NC_008767.1"/>
</dbReference>
<dbReference type="SMR" id="A1KR52"/>
<dbReference type="KEGG" id="nmc:NMC0001"/>
<dbReference type="HOGENOM" id="CLU_046528_1_0_4"/>
<dbReference type="UniPathway" id="UPA00359">
    <property type="reaction ID" value="UER00478"/>
</dbReference>
<dbReference type="Proteomes" id="UP000002286">
    <property type="component" value="Chromosome"/>
</dbReference>
<dbReference type="GO" id="GO:0016020">
    <property type="term" value="C:membrane"/>
    <property type="evidence" value="ECO:0007669"/>
    <property type="project" value="GOC"/>
</dbReference>
<dbReference type="GO" id="GO:0046872">
    <property type="term" value="F:metal ion binding"/>
    <property type="evidence" value="ECO:0007669"/>
    <property type="project" value="UniProtKB-KW"/>
</dbReference>
<dbReference type="GO" id="GO:0103117">
    <property type="term" value="F:UDP-3-O-acyl-N-acetylglucosamine deacetylase activity"/>
    <property type="evidence" value="ECO:0007669"/>
    <property type="project" value="UniProtKB-UniRule"/>
</dbReference>
<dbReference type="GO" id="GO:0009245">
    <property type="term" value="P:lipid A biosynthetic process"/>
    <property type="evidence" value="ECO:0007669"/>
    <property type="project" value="UniProtKB-UniRule"/>
</dbReference>
<dbReference type="Gene3D" id="3.30.230.20">
    <property type="entry name" value="lpxc deacetylase, domain 1"/>
    <property type="match status" value="1"/>
</dbReference>
<dbReference type="Gene3D" id="3.30.1700.10">
    <property type="entry name" value="lpxc deacetylase, domain 2"/>
    <property type="match status" value="1"/>
</dbReference>
<dbReference type="HAMAP" id="MF_00388">
    <property type="entry name" value="LpxC"/>
    <property type="match status" value="1"/>
</dbReference>
<dbReference type="InterPro" id="IPR020568">
    <property type="entry name" value="Ribosomal_Su5_D2-typ_SF"/>
</dbReference>
<dbReference type="InterPro" id="IPR004463">
    <property type="entry name" value="UDP-acyl_GlcNac_deAcase"/>
</dbReference>
<dbReference type="InterPro" id="IPR011334">
    <property type="entry name" value="UDP-acyl_GlcNac_deAcase_C"/>
</dbReference>
<dbReference type="InterPro" id="IPR015870">
    <property type="entry name" value="UDP-acyl_N-AcGlcN_deAcase_N"/>
</dbReference>
<dbReference type="NCBIfam" id="TIGR00325">
    <property type="entry name" value="lpxC"/>
    <property type="match status" value="1"/>
</dbReference>
<dbReference type="PANTHER" id="PTHR33694">
    <property type="entry name" value="UDP-3-O-ACYL-N-ACETYLGLUCOSAMINE DEACETYLASE 1, MITOCHONDRIAL-RELATED"/>
    <property type="match status" value="1"/>
</dbReference>
<dbReference type="PANTHER" id="PTHR33694:SF1">
    <property type="entry name" value="UDP-3-O-ACYL-N-ACETYLGLUCOSAMINE DEACETYLASE 1, MITOCHONDRIAL-RELATED"/>
    <property type="match status" value="1"/>
</dbReference>
<dbReference type="Pfam" id="PF03331">
    <property type="entry name" value="LpxC"/>
    <property type="match status" value="1"/>
</dbReference>
<dbReference type="SUPFAM" id="SSF54211">
    <property type="entry name" value="Ribosomal protein S5 domain 2-like"/>
    <property type="match status" value="2"/>
</dbReference>
<evidence type="ECO:0000255" key="1">
    <source>
        <dbReference type="HAMAP-Rule" id="MF_00388"/>
    </source>
</evidence>
<proteinExistence type="inferred from homology"/>